<evidence type="ECO:0000250" key="1"/>
<evidence type="ECO:0000255" key="2"/>
<evidence type="ECO:0000255" key="3">
    <source>
        <dbReference type="PROSITE-ProRule" id="PRU10126"/>
    </source>
</evidence>
<evidence type="ECO:0000305" key="4"/>
<protein>
    <recommendedName>
        <fullName>Bifunctional protein GAL10</fullName>
    </recommendedName>
    <domain>
        <recommendedName>
            <fullName>UDP-glucose 4-epimerase</fullName>
            <ecNumber>5.1.3.2</ecNumber>
        </recommendedName>
        <alternativeName>
            <fullName>Galactowaldenase</fullName>
        </alternativeName>
    </domain>
    <domain>
        <recommendedName>
            <fullName>Aldose 1-epimerase</fullName>
            <ecNumber>5.1.3.3</ecNumber>
        </recommendedName>
        <alternativeName>
            <fullName>Galactose mutarotase</fullName>
        </alternativeName>
    </domain>
</protein>
<reference key="1">
    <citation type="journal article" date="1988" name="Nucleic Acids Res.">
        <title>Nucleotide sequence of the galactose gene cluster of Kluyveromyces lactis.</title>
        <authorList>
            <person name="Webster T.D."/>
            <person name="Dickson R.C."/>
        </authorList>
    </citation>
    <scope>NUCLEOTIDE SEQUENCE [GENOMIC DNA]</scope>
    <source>
        <strain>ATCC 8585 / CBS 2359 / DSM 70799 / NBRC 1267 / NRRL Y-1140 / WM37</strain>
    </source>
</reference>
<reference key="2">
    <citation type="journal article" date="2004" name="Nature">
        <title>Genome evolution in yeasts.</title>
        <authorList>
            <person name="Dujon B."/>
            <person name="Sherman D."/>
            <person name="Fischer G."/>
            <person name="Durrens P."/>
            <person name="Casaregola S."/>
            <person name="Lafontaine I."/>
            <person name="de Montigny J."/>
            <person name="Marck C."/>
            <person name="Neuveglise C."/>
            <person name="Talla E."/>
            <person name="Goffard N."/>
            <person name="Frangeul L."/>
            <person name="Aigle M."/>
            <person name="Anthouard V."/>
            <person name="Babour A."/>
            <person name="Barbe V."/>
            <person name="Barnay S."/>
            <person name="Blanchin S."/>
            <person name="Beckerich J.-M."/>
            <person name="Beyne E."/>
            <person name="Bleykasten C."/>
            <person name="Boisrame A."/>
            <person name="Boyer J."/>
            <person name="Cattolico L."/>
            <person name="Confanioleri F."/>
            <person name="de Daruvar A."/>
            <person name="Despons L."/>
            <person name="Fabre E."/>
            <person name="Fairhead C."/>
            <person name="Ferry-Dumazet H."/>
            <person name="Groppi A."/>
            <person name="Hantraye F."/>
            <person name="Hennequin C."/>
            <person name="Jauniaux N."/>
            <person name="Joyet P."/>
            <person name="Kachouri R."/>
            <person name="Kerrest A."/>
            <person name="Koszul R."/>
            <person name="Lemaire M."/>
            <person name="Lesur I."/>
            <person name="Ma L."/>
            <person name="Muller H."/>
            <person name="Nicaud J.-M."/>
            <person name="Nikolski M."/>
            <person name="Oztas S."/>
            <person name="Ozier-Kalogeropoulos O."/>
            <person name="Pellenz S."/>
            <person name="Potier S."/>
            <person name="Richard G.-F."/>
            <person name="Straub M.-L."/>
            <person name="Suleau A."/>
            <person name="Swennen D."/>
            <person name="Tekaia F."/>
            <person name="Wesolowski-Louvel M."/>
            <person name="Westhof E."/>
            <person name="Wirth B."/>
            <person name="Zeniou-Meyer M."/>
            <person name="Zivanovic Y."/>
            <person name="Bolotin-Fukuhara M."/>
            <person name="Thierry A."/>
            <person name="Bouchier C."/>
            <person name="Caudron B."/>
            <person name="Scarpelli C."/>
            <person name="Gaillardin C."/>
            <person name="Weissenbach J."/>
            <person name="Wincker P."/>
            <person name="Souciet J.-L."/>
        </authorList>
    </citation>
    <scope>NUCLEOTIDE SEQUENCE [LARGE SCALE GENOMIC DNA]</scope>
    <source>
        <strain>ATCC 8585 / CBS 2359 / DSM 70799 / NBRC 1267 / NRRL Y-1140 / WM37</strain>
    </source>
</reference>
<accession>P09609</accession>
<accession>Q6CKS7</accession>
<proteinExistence type="evidence at transcript level"/>
<gene>
    <name type="primary">GAL10</name>
    <name type="ordered locus">KLLA0F08415g</name>
</gene>
<name>GAL10_KLULA</name>
<feature type="chain" id="PRO_0000197439" description="Bifunctional protein GAL10">
    <location>
        <begin position="1"/>
        <end position="688"/>
    </location>
</feature>
<feature type="region of interest" description="Galactowaldenase">
    <location>
        <begin position="1"/>
        <end position="346"/>
    </location>
</feature>
<feature type="region of interest" description="Mutarotase">
    <location>
        <begin position="347"/>
        <end position="688"/>
    </location>
</feature>
<feature type="active site" description="For mutarotase activity" evidence="2">
    <location>
        <position position="525"/>
    </location>
</feature>
<feature type="binding site" evidence="2">
    <location>
        <begin position="6"/>
        <end position="37"/>
    </location>
    <ligand>
        <name>NAD(+)</name>
        <dbReference type="ChEBI" id="CHEBI:57540"/>
    </ligand>
</feature>
<feature type="sequence conflict" description="In Ref. 1; CAA30090." evidence="4" ref="1">
    <original>DPL</original>
    <variation>AF</variation>
    <location>
        <begin position="199"/>
        <end position="201"/>
    </location>
</feature>
<dbReference type="EC" id="5.1.3.2"/>
<dbReference type="EC" id="5.1.3.3"/>
<dbReference type="EMBL" id="X07039">
    <property type="protein sequence ID" value="CAA30090.1"/>
    <property type="molecule type" value="Genomic_DNA"/>
</dbReference>
<dbReference type="EMBL" id="CR382126">
    <property type="protein sequence ID" value="CAG98170.1"/>
    <property type="molecule type" value="Genomic_DNA"/>
</dbReference>
<dbReference type="PIR" id="S01407">
    <property type="entry name" value="XUVKG"/>
</dbReference>
<dbReference type="RefSeq" id="XP_455462.1">
    <property type="nucleotide sequence ID" value="XM_455462.1"/>
</dbReference>
<dbReference type="SMR" id="P09609"/>
<dbReference type="FunCoup" id="P09609">
    <property type="interactions" value="553"/>
</dbReference>
<dbReference type="STRING" id="284590.P09609"/>
<dbReference type="PaxDb" id="284590-P09609"/>
<dbReference type="KEGG" id="kla:KLLA0_F08415g"/>
<dbReference type="eggNOG" id="KOG1371">
    <property type="taxonomic scope" value="Eukaryota"/>
</dbReference>
<dbReference type="HOGENOM" id="CLU_007383_22_0_1"/>
<dbReference type="InParanoid" id="P09609"/>
<dbReference type="OMA" id="KGLYREW"/>
<dbReference type="UniPathway" id="UPA00214"/>
<dbReference type="UniPathway" id="UPA00242"/>
<dbReference type="Proteomes" id="UP000000598">
    <property type="component" value="Chromosome F"/>
</dbReference>
<dbReference type="GO" id="GO:0005829">
    <property type="term" value="C:cytosol"/>
    <property type="evidence" value="ECO:0007669"/>
    <property type="project" value="TreeGrafter"/>
</dbReference>
<dbReference type="GO" id="GO:0004034">
    <property type="term" value="F:aldose 1-epimerase activity"/>
    <property type="evidence" value="ECO:0007669"/>
    <property type="project" value="UniProtKB-EC"/>
</dbReference>
<dbReference type="GO" id="GO:0030246">
    <property type="term" value="F:carbohydrate binding"/>
    <property type="evidence" value="ECO:0007669"/>
    <property type="project" value="InterPro"/>
</dbReference>
<dbReference type="GO" id="GO:0003978">
    <property type="term" value="F:UDP-glucose 4-epimerase activity"/>
    <property type="evidence" value="ECO:0007669"/>
    <property type="project" value="UniProtKB-EC"/>
</dbReference>
<dbReference type="GO" id="GO:0006012">
    <property type="term" value="P:galactose metabolic process"/>
    <property type="evidence" value="ECO:0007669"/>
    <property type="project" value="UniProtKB-UniPathway"/>
</dbReference>
<dbReference type="CDD" id="cd09019">
    <property type="entry name" value="galactose_mutarotase_like"/>
    <property type="match status" value="1"/>
</dbReference>
<dbReference type="CDD" id="cd05247">
    <property type="entry name" value="UDP_G4E_1_SDR_e"/>
    <property type="match status" value="1"/>
</dbReference>
<dbReference type="Gene3D" id="2.70.98.10">
    <property type="match status" value="1"/>
</dbReference>
<dbReference type="Gene3D" id="3.40.50.720">
    <property type="entry name" value="NAD(P)-binding Rossmann-like Domain"/>
    <property type="match status" value="1"/>
</dbReference>
<dbReference type="Gene3D" id="3.90.25.10">
    <property type="entry name" value="UDP-galactose 4-epimerase, domain 1"/>
    <property type="match status" value="1"/>
</dbReference>
<dbReference type="InterPro" id="IPR018052">
    <property type="entry name" value="Ald1_epimerase_CS"/>
</dbReference>
<dbReference type="InterPro" id="IPR008183">
    <property type="entry name" value="Aldose_1/G6P_1-epimerase"/>
</dbReference>
<dbReference type="InterPro" id="IPR001509">
    <property type="entry name" value="Epimerase_deHydtase"/>
</dbReference>
<dbReference type="InterPro" id="IPR011013">
    <property type="entry name" value="Gal_mutarotase_sf_dom"/>
</dbReference>
<dbReference type="InterPro" id="IPR047215">
    <property type="entry name" value="Galactose_mutarotase-like"/>
</dbReference>
<dbReference type="InterPro" id="IPR014718">
    <property type="entry name" value="GH-type_carb-bd"/>
</dbReference>
<dbReference type="InterPro" id="IPR036291">
    <property type="entry name" value="NAD(P)-bd_dom_sf"/>
</dbReference>
<dbReference type="InterPro" id="IPR005886">
    <property type="entry name" value="UDP_G4E"/>
</dbReference>
<dbReference type="NCBIfam" id="TIGR01179">
    <property type="entry name" value="galE"/>
    <property type="match status" value="1"/>
</dbReference>
<dbReference type="PANTHER" id="PTHR43725">
    <property type="entry name" value="UDP-GLUCOSE 4-EPIMERASE"/>
    <property type="match status" value="1"/>
</dbReference>
<dbReference type="PANTHER" id="PTHR43725:SF47">
    <property type="entry name" value="UDP-GLUCOSE 4-EPIMERASE"/>
    <property type="match status" value="1"/>
</dbReference>
<dbReference type="Pfam" id="PF01263">
    <property type="entry name" value="Aldose_epim"/>
    <property type="match status" value="1"/>
</dbReference>
<dbReference type="Pfam" id="PF01370">
    <property type="entry name" value="Epimerase"/>
    <property type="match status" value="1"/>
</dbReference>
<dbReference type="SUPFAM" id="SSF74650">
    <property type="entry name" value="Galactose mutarotase-like"/>
    <property type="match status" value="1"/>
</dbReference>
<dbReference type="SUPFAM" id="SSF51735">
    <property type="entry name" value="NAD(P)-binding Rossmann-fold domains"/>
    <property type="match status" value="1"/>
</dbReference>
<dbReference type="PROSITE" id="PS00545">
    <property type="entry name" value="ALDOSE_1_EPIMERASE"/>
    <property type="match status" value="1"/>
</dbReference>
<comment type="function">
    <text evidence="1">Mutarotase converts alpha-aldose to the beta-anomer. It is active on D-glucose, L-arabinose, D-xylose, D-galactose, maltose and lactose (By similarity).</text>
</comment>
<comment type="catalytic activity">
    <reaction>
        <text>UDP-alpha-D-glucose = UDP-alpha-D-galactose</text>
        <dbReference type="Rhea" id="RHEA:22168"/>
        <dbReference type="ChEBI" id="CHEBI:58885"/>
        <dbReference type="ChEBI" id="CHEBI:66914"/>
        <dbReference type="EC" id="5.1.3.2"/>
    </reaction>
</comment>
<comment type="catalytic activity">
    <reaction evidence="3">
        <text>alpha-D-glucose = beta-D-glucose</text>
        <dbReference type="Rhea" id="RHEA:10264"/>
        <dbReference type="ChEBI" id="CHEBI:15903"/>
        <dbReference type="ChEBI" id="CHEBI:17925"/>
        <dbReference type="EC" id="5.1.3.3"/>
    </reaction>
</comment>
<comment type="cofactor">
    <cofactor>
        <name>NAD(+)</name>
        <dbReference type="ChEBI" id="CHEBI:57540"/>
    </cofactor>
</comment>
<comment type="pathway">
    <text>Carbohydrate metabolism; galactose metabolism.</text>
</comment>
<comment type="pathway">
    <text>Carbohydrate metabolism; hexose metabolism.</text>
</comment>
<comment type="induction">
    <text>By galactose.</text>
</comment>
<comment type="similarity">
    <text evidence="4">In the N-terminal section; belongs to the NAD(P)-dependent epimerase/dehydratase family.</text>
</comment>
<comment type="similarity">
    <text evidence="4">In the C-terminal section; belongs to the aldose epimerase family.</text>
</comment>
<keyword id="KW-0119">Carbohydrate metabolism</keyword>
<keyword id="KW-0299">Galactose metabolism</keyword>
<keyword id="KW-0413">Isomerase</keyword>
<keyword id="KW-0511">Multifunctional enzyme</keyword>
<keyword id="KW-0520">NAD</keyword>
<keyword id="KW-1185">Reference proteome</keyword>
<sequence>MSEDKYCLVTGGAGYIGSHTVVELCEAGYKCIVVDNLSNSSYESVARMELLTGQEIKFAKIDLCELEPLNKLFDDYKIDSVLHFAGLKAVGESTQIPLTYYFNNIVGTINLLECMKSHDVKKLVFSSSATVYGDATRFENMIPIPETCPTGPTNPYGKTKLTIEDMMRDLHFSDKSFSFAILRYFNPIGAHPSGVIGEDPLGIPNNLLPFMAQVAIGRRPKLYVFGDDYDSVDGTPIRDYIHVVDLAKGHLAALKYLEKYAGTCREWNLGTGHGTTVLQMYRAFCDAIGFNFEYVVTARRDGDVLNLTAKCDRATNELEWKTELDVNKACVDLWKWTQDNPFGYQIKGVDSKFFGDKGDFSSRVVSLGKGTSFEVKLANLGATIVDIVVNGCSVVASLDNETEYKDQSNPFFGATVGPYANRIANGTFEINGKRIQLTVSKEDGNVVHSGINSYHSKKFLGPIVKNPEAHIWTADFKYVDEETEFPARLSTLVRYKVDSEKKTLTVEYESKVAGQGSTGANITNHTYFNLNKFNEATIKGSKVQLIDNTGLEVNNKLLPTGNLKKYTQVATFNDSPTEITEKEPVLDFCFVSGLPAKLDTRSSPLTPVFKLSNEDAKLEVEVATTEPTFQVYTGDYVDVKDKYENRAGICCEPGRYIDAVNNPEWKSSVVLPAGETYGHKLSYTFRTL</sequence>
<organism>
    <name type="scientific">Kluyveromyces lactis (strain ATCC 8585 / CBS 2359 / DSM 70799 / NBRC 1267 / NRRL Y-1140 / WM37)</name>
    <name type="common">Yeast</name>
    <name type="synonym">Candida sphaerica</name>
    <dbReference type="NCBI Taxonomy" id="284590"/>
    <lineage>
        <taxon>Eukaryota</taxon>
        <taxon>Fungi</taxon>
        <taxon>Dikarya</taxon>
        <taxon>Ascomycota</taxon>
        <taxon>Saccharomycotina</taxon>
        <taxon>Saccharomycetes</taxon>
        <taxon>Saccharomycetales</taxon>
        <taxon>Saccharomycetaceae</taxon>
        <taxon>Kluyveromyces</taxon>
    </lineage>
</organism>